<comment type="function">
    <text evidence="1">DNA-dependent RNA polymerase catalyzes the transcription of DNA into RNA using the four ribonucleoside triphosphates as substrates.</text>
</comment>
<comment type="catalytic activity">
    <reaction evidence="1">
        <text>RNA(n) + a ribonucleoside 5'-triphosphate = RNA(n+1) + diphosphate</text>
        <dbReference type="Rhea" id="RHEA:21248"/>
        <dbReference type="Rhea" id="RHEA-COMP:14527"/>
        <dbReference type="Rhea" id="RHEA-COMP:17342"/>
        <dbReference type="ChEBI" id="CHEBI:33019"/>
        <dbReference type="ChEBI" id="CHEBI:61557"/>
        <dbReference type="ChEBI" id="CHEBI:140395"/>
        <dbReference type="EC" id="2.7.7.6"/>
    </reaction>
</comment>
<comment type="subunit">
    <text evidence="1">The RNAP catalytic core consists of 2 alpha, 1 beta, 1 beta' and 1 omega subunit. When a sigma factor is associated with the core the holoenzyme is formed, which can initiate transcription.</text>
</comment>
<comment type="similarity">
    <text evidence="1">Belongs to the RNA polymerase beta chain family.</text>
</comment>
<dbReference type="EC" id="2.7.7.6" evidence="1"/>
<dbReference type="EMBL" id="CP000388">
    <property type="protein sequence ID" value="ABG39127.1"/>
    <property type="molecule type" value="Genomic_DNA"/>
</dbReference>
<dbReference type="RefSeq" id="WP_011573497.1">
    <property type="nucleotide sequence ID" value="NC_008228.1"/>
</dbReference>
<dbReference type="SMR" id="Q15YB1"/>
<dbReference type="STRING" id="342610.Patl_0598"/>
<dbReference type="KEGG" id="pat:Patl_0598"/>
<dbReference type="eggNOG" id="COG0085">
    <property type="taxonomic scope" value="Bacteria"/>
</dbReference>
<dbReference type="HOGENOM" id="CLU_000524_4_0_6"/>
<dbReference type="OrthoDB" id="9803954at2"/>
<dbReference type="Proteomes" id="UP000001981">
    <property type="component" value="Chromosome"/>
</dbReference>
<dbReference type="GO" id="GO:0000428">
    <property type="term" value="C:DNA-directed RNA polymerase complex"/>
    <property type="evidence" value="ECO:0007669"/>
    <property type="project" value="UniProtKB-KW"/>
</dbReference>
<dbReference type="GO" id="GO:0003677">
    <property type="term" value="F:DNA binding"/>
    <property type="evidence" value="ECO:0007669"/>
    <property type="project" value="UniProtKB-UniRule"/>
</dbReference>
<dbReference type="GO" id="GO:0003899">
    <property type="term" value="F:DNA-directed RNA polymerase activity"/>
    <property type="evidence" value="ECO:0007669"/>
    <property type="project" value="UniProtKB-UniRule"/>
</dbReference>
<dbReference type="GO" id="GO:0032549">
    <property type="term" value="F:ribonucleoside binding"/>
    <property type="evidence" value="ECO:0007669"/>
    <property type="project" value="InterPro"/>
</dbReference>
<dbReference type="GO" id="GO:0006351">
    <property type="term" value="P:DNA-templated transcription"/>
    <property type="evidence" value="ECO:0007669"/>
    <property type="project" value="UniProtKB-UniRule"/>
</dbReference>
<dbReference type="CDD" id="cd00653">
    <property type="entry name" value="RNA_pol_B_RPB2"/>
    <property type="match status" value="1"/>
</dbReference>
<dbReference type="FunFam" id="2.40.270.10:FF:000004">
    <property type="entry name" value="DNA-directed RNA polymerase subunit beta"/>
    <property type="match status" value="1"/>
</dbReference>
<dbReference type="FunFam" id="2.40.50.100:FF:000006">
    <property type="entry name" value="DNA-directed RNA polymerase subunit beta"/>
    <property type="match status" value="1"/>
</dbReference>
<dbReference type="FunFam" id="2.40.50.150:FF:000001">
    <property type="entry name" value="DNA-directed RNA polymerase subunit beta"/>
    <property type="match status" value="1"/>
</dbReference>
<dbReference type="FunFam" id="3.90.1100.10:FF:000002">
    <property type="entry name" value="DNA-directed RNA polymerase subunit beta"/>
    <property type="match status" value="1"/>
</dbReference>
<dbReference type="FunFam" id="3.90.1110.10:FF:000001">
    <property type="entry name" value="DNA-directed RNA polymerase subunit beta"/>
    <property type="match status" value="1"/>
</dbReference>
<dbReference type="FunFam" id="3.90.1110.10:FF:000004">
    <property type="entry name" value="DNA-directed RNA polymerase subunit beta"/>
    <property type="match status" value="1"/>
</dbReference>
<dbReference type="FunFam" id="3.90.1800.10:FF:000001">
    <property type="entry name" value="DNA-directed RNA polymerase subunit beta"/>
    <property type="match status" value="1"/>
</dbReference>
<dbReference type="Gene3D" id="2.40.50.100">
    <property type="match status" value="1"/>
</dbReference>
<dbReference type="Gene3D" id="2.40.50.150">
    <property type="match status" value="1"/>
</dbReference>
<dbReference type="Gene3D" id="3.90.1100.10">
    <property type="match status" value="2"/>
</dbReference>
<dbReference type="Gene3D" id="2.30.150.10">
    <property type="entry name" value="DNA-directed RNA polymerase, beta subunit, external 1 domain"/>
    <property type="match status" value="1"/>
</dbReference>
<dbReference type="Gene3D" id="2.40.270.10">
    <property type="entry name" value="DNA-directed RNA polymerase, subunit 2, domain 6"/>
    <property type="match status" value="1"/>
</dbReference>
<dbReference type="Gene3D" id="3.90.1800.10">
    <property type="entry name" value="RNA polymerase alpha subunit dimerisation domain"/>
    <property type="match status" value="1"/>
</dbReference>
<dbReference type="Gene3D" id="3.90.1110.10">
    <property type="entry name" value="RNA polymerase Rpb2, domain 2"/>
    <property type="match status" value="1"/>
</dbReference>
<dbReference type="HAMAP" id="MF_01321">
    <property type="entry name" value="RNApol_bact_RpoB"/>
    <property type="match status" value="1"/>
</dbReference>
<dbReference type="InterPro" id="IPR042107">
    <property type="entry name" value="DNA-dir_RNA_pol_bsu_ext_1_sf"/>
</dbReference>
<dbReference type="InterPro" id="IPR019462">
    <property type="entry name" value="DNA-dir_RNA_pol_bsu_external_1"/>
</dbReference>
<dbReference type="InterPro" id="IPR015712">
    <property type="entry name" value="DNA-dir_RNA_pol_su2"/>
</dbReference>
<dbReference type="InterPro" id="IPR007120">
    <property type="entry name" value="DNA-dir_RNAP_su2_dom"/>
</dbReference>
<dbReference type="InterPro" id="IPR037033">
    <property type="entry name" value="DNA-dir_RNAP_su2_hyb_sf"/>
</dbReference>
<dbReference type="InterPro" id="IPR010243">
    <property type="entry name" value="RNA_pol_bsu_bac"/>
</dbReference>
<dbReference type="InterPro" id="IPR007121">
    <property type="entry name" value="RNA_pol_bsu_CS"/>
</dbReference>
<dbReference type="InterPro" id="IPR007644">
    <property type="entry name" value="RNA_pol_bsu_protrusion"/>
</dbReference>
<dbReference type="InterPro" id="IPR007642">
    <property type="entry name" value="RNA_pol_Rpb2_2"/>
</dbReference>
<dbReference type="InterPro" id="IPR037034">
    <property type="entry name" value="RNA_pol_Rpb2_2_sf"/>
</dbReference>
<dbReference type="InterPro" id="IPR007645">
    <property type="entry name" value="RNA_pol_Rpb2_3"/>
</dbReference>
<dbReference type="InterPro" id="IPR007641">
    <property type="entry name" value="RNA_pol_Rpb2_7"/>
</dbReference>
<dbReference type="InterPro" id="IPR014724">
    <property type="entry name" value="RNA_pol_RPB2_OB-fold"/>
</dbReference>
<dbReference type="NCBIfam" id="NF001616">
    <property type="entry name" value="PRK00405.1"/>
    <property type="match status" value="1"/>
</dbReference>
<dbReference type="NCBIfam" id="TIGR02013">
    <property type="entry name" value="rpoB"/>
    <property type="match status" value="1"/>
</dbReference>
<dbReference type="PANTHER" id="PTHR20856">
    <property type="entry name" value="DNA-DIRECTED RNA POLYMERASE I SUBUNIT 2"/>
    <property type="match status" value="1"/>
</dbReference>
<dbReference type="Pfam" id="PF04563">
    <property type="entry name" value="RNA_pol_Rpb2_1"/>
    <property type="match status" value="1"/>
</dbReference>
<dbReference type="Pfam" id="PF04561">
    <property type="entry name" value="RNA_pol_Rpb2_2"/>
    <property type="match status" value="2"/>
</dbReference>
<dbReference type="Pfam" id="PF04565">
    <property type="entry name" value="RNA_pol_Rpb2_3"/>
    <property type="match status" value="1"/>
</dbReference>
<dbReference type="Pfam" id="PF10385">
    <property type="entry name" value="RNA_pol_Rpb2_45"/>
    <property type="match status" value="1"/>
</dbReference>
<dbReference type="Pfam" id="PF00562">
    <property type="entry name" value="RNA_pol_Rpb2_6"/>
    <property type="match status" value="1"/>
</dbReference>
<dbReference type="Pfam" id="PF04560">
    <property type="entry name" value="RNA_pol_Rpb2_7"/>
    <property type="match status" value="1"/>
</dbReference>
<dbReference type="SUPFAM" id="SSF64484">
    <property type="entry name" value="beta and beta-prime subunits of DNA dependent RNA-polymerase"/>
    <property type="match status" value="1"/>
</dbReference>
<dbReference type="PROSITE" id="PS01166">
    <property type="entry name" value="RNA_POL_BETA"/>
    <property type="match status" value="1"/>
</dbReference>
<name>RPOB_PSEA6</name>
<gene>
    <name evidence="1" type="primary">rpoB</name>
    <name type="ordered locus">Patl_0598</name>
</gene>
<evidence type="ECO:0000255" key="1">
    <source>
        <dbReference type="HAMAP-Rule" id="MF_01321"/>
    </source>
</evidence>
<proteinExistence type="inferred from homology"/>
<organism>
    <name type="scientific">Pseudoalteromonas atlantica (strain T6c / ATCC BAA-1087)</name>
    <dbReference type="NCBI Taxonomy" id="3042615"/>
    <lineage>
        <taxon>Bacteria</taxon>
        <taxon>Pseudomonadati</taxon>
        <taxon>Pseudomonadota</taxon>
        <taxon>Gammaproteobacteria</taxon>
        <taxon>Alteromonadales</taxon>
        <taxon>Alteromonadaceae</taxon>
        <taxon>Paraglaciecola</taxon>
    </lineage>
</organism>
<keyword id="KW-0240">DNA-directed RNA polymerase</keyword>
<keyword id="KW-0548">Nucleotidyltransferase</keyword>
<keyword id="KW-0804">Transcription</keyword>
<keyword id="KW-0808">Transferase</keyword>
<feature type="chain" id="PRO_0000300374" description="DNA-directed RNA polymerase subunit beta">
    <location>
        <begin position="1"/>
        <end position="1342"/>
    </location>
</feature>
<sequence>MVYSYSEKKRIRKDFGKRPQVLEIPYLLSIQLDSFKKFIDLDVDGQHGLEAAFRSVFPIKSYSGNAELQYVSYRLGEPVFDVKECQIRGVTFSAPLRVKLRLVLFDREAAPGTVKDIKEQEVYMGEIPLMTENGTFVINGTERVIVSQLHRSPGVFFDHDKGKTHSSGKVLYNARVIPYRGSWLDFEFDPKDNLYVRIDRRRKLPATIMLRALEIPTEEILGMFFEKNQVRIDGNRFMSDIVPDRLRGETAQFDILDSDGNVLVEAGRRISARHTRALEKAGIVELEVPAEYLVGRVFACDYVDQETGELVVAANDLLTLENVLALKEAGYTTFETLYINELDHGAYISDTLRIDSSTNRLEALVEIYRMMRPGEPPTKDAAETLFTNLFFSEDRYDLSSVGRMKFNRRLGRETSIGAGTLDKDDIVDVMKQLITIRDGKDDVDDIDHLGNRRIRSVGEMAENQFRVGLVRVERAVKERLSLGDLDAVMPQDLINAKPISAAVKEFFGSSQLSQFMDQNNPLSEVTDKRRISALGPGGLTRERAGFEVRDVHPTHYGRVCPIETPEGPNIGLINSLASFARTNDFGFLETPYRKIVDGVVTDEIDYLSAIEEGQFSIAQANVVLDETGRLADDLIPCRHRGETTLKESSEITYMDVSPQQIVSIAASIIPFLEHDDANRALMGANMQRQAVPTLIADKPLVGTGMEKTVAVDSGVTVVAKRGGRVDYVDASRIVIKVNEEETVAGEAGIDIYNLTKYTRSNQNTCINQRPTCNVGEPIVAGDVLADGPSTDLGELALGQNMRIAFMPWNGYNFEDSILISERVAMEDRFTTIHIQELSCVARDTKLGPEEISSDIPNVGESALGKLDESGVVYIGAEVKGGDILVGKVTPKGETQLTPEEKLLRAIFGEKASDVKDTSLRVPNSVRGTVIDVQVFTRDGVEKDKRALEIEGMQLRQVKKDLSDEFNILADGIFARAKNLLIKSGIEESRLESAQREKWFDLTLTDEDAQTELDQIAEQFVEIKADFDKKFEIKRRKITQGDDLQPGVLKIVKVYLAVKRQIQPGDKMAGRHGNKGVISTIKPVEDMPYDVNGTPVDIVLNPLGVPSRMNIGQILETHLGMAAHGIGVKIDRMLKEHEEMAKLRSFLKEVYGAGTTHQEVDLDNFSDDEITRLADNLRKGVPMATPVFDGATEAEIKHMLTLADLPESGQIALFDGRTGREFERPVTVGYMYMLKLNHLVDDKMHARSTGSYSLVTQQPLGGKAQFGGQRFGEMEVWALEAYGAAYTLQEMLTVKSDDVNGRTKMYKNIVDGDHRMEPGMPESFNVLLKEIRSLGINIELEEQ</sequence>
<reference key="1">
    <citation type="submission" date="2006-06" db="EMBL/GenBank/DDBJ databases">
        <title>Complete sequence of Pseudoalteromonas atlantica T6c.</title>
        <authorList>
            <consortium name="US DOE Joint Genome Institute"/>
            <person name="Copeland A."/>
            <person name="Lucas S."/>
            <person name="Lapidus A."/>
            <person name="Barry K."/>
            <person name="Detter J.C."/>
            <person name="Glavina del Rio T."/>
            <person name="Hammon N."/>
            <person name="Israni S."/>
            <person name="Dalin E."/>
            <person name="Tice H."/>
            <person name="Pitluck S."/>
            <person name="Saunders E."/>
            <person name="Brettin T."/>
            <person name="Bruce D."/>
            <person name="Han C."/>
            <person name="Tapia R."/>
            <person name="Gilna P."/>
            <person name="Schmutz J."/>
            <person name="Larimer F."/>
            <person name="Land M."/>
            <person name="Hauser L."/>
            <person name="Kyrpides N."/>
            <person name="Kim E."/>
            <person name="Karls A.C."/>
            <person name="Bartlett D."/>
            <person name="Higgins B.P."/>
            <person name="Richardson P."/>
        </authorList>
    </citation>
    <scope>NUCLEOTIDE SEQUENCE [LARGE SCALE GENOMIC DNA]</scope>
    <source>
        <strain>T6c / ATCC BAA-1087</strain>
    </source>
</reference>
<accession>Q15YB1</accession>
<protein>
    <recommendedName>
        <fullName evidence="1">DNA-directed RNA polymerase subunit beta</fullName>
        <shortName evidence="1">RNAP subunit beta</shortName>
        <ecNumber evidence="1">2.7.7.6</ecNumber>
    </recommendedName>
    <alternativeName>
        <fullName evidence="1">RNA polymerase subunit beta</fullName>
    </alternativeName>
    <alternativeName>
        <fullName evidence="1">Transcriptase subunit beta</fullName>
    </alternativeName>
</protein>